<evidence type="ECO:0000255" key="1">
    <source>
        <dbReference type="HAMAP-Rule" id="MF_00378"/>
    </source>
</evidence>
<name>EX7L_VESOH</name>
<reference key="1">
    <citation type="journal article" date="2007" name="Curr. Biol.">
        <title>Reduced genome of the thioautotrophic intracellular symbiont in a deep-sea clam, Calyptogena okutanii.</title>
        <authorList>
            <person name="Kuwahara H."/>
            <person name="Yoshida T."/>
            <person name="Takaki Y."/>
            <person name="Shimamura S."/>
            <person name="Nishi S."/>
            <person name="Harada M."/>
            <person name="Matsuyama K."/>
            <person name="Takishita K."/>
            <person name="Kawato M."/>
            <person name="Uematsu K."/>
            <person name="Fujiwara Y."/>
            <person name="Sato T."/>
            <person name="Kato C."/>
            <person name="Kitagawa M."/>
            <person name="Kato I."/>
            <person name="Maruyama T."/>
        </authorList>
    </citation>
    <scope>NUCLEOTIDE SEQUENCE [LARGE SCALE GENOMIC DNA]</scope>
    <source>
        <strain>HA</strain>
    </source>
</reference>
<accession>A5CW49</accession>
<proteinExistence type="inferred from homology"/>
<comment type="function">
    <text evidence="1">Bidirectionally degrades single-stranded DNA into large acid-insoluble oligonucleotides, which are then degraded further into small acid-soluble oligonucleotides.</text>
</comment>
<comment type="catalytic activity">
    <reaction evidence="1">
        <text>Exonucleolytic cleavage in either 5'- to 3'- or 3'- to 5'-direction to yield nucleoside 5'-phosphates.</text>
        <dbReference type="EC" id="3.1.11.6"/>
    </reaction>
</comment>
<comment type="subunit">
    <text evidence="1">Heterooligomer composed of large and small subunits.</text>
</comment>
<comment type="subcellular location">
    <subcellularLocation>
        <location evidence="1">Cytoplasm</location>
    </subcellularLocation>
</comment>
<comment type="similarity">
    <text evidence="1">Belongs to the XseA family.</text>
</comment>
<protein>
    <recommendedName>
        <fullName evidence="1">Exodeoxyribonuclease 7 large subunit</fullName>
        <ecNumber evidence="1">3.1.11.6</ecNumber>
    </recommendedName>
    <alternativeName>
        <fullName evidence="1">Exodeoxyribonuclease VII large subunit</fullName>
        <shortName evidence="1">Exonuclease VII large subunit</shortName>
    </alternativeName>
</protein>
<keyword id="KW-0963">Cytoplasm</keyword>
<keyword id="KW-0269">Exonuclease</keyword>
<keyword id="KW-0378">Hydrolase</keyword>
<keyword id="KW-0540">Nuclease</keyword>
<keyword id="KW-1185">Reference proteome</keyword>
<sequence>MFNIDEVYTISSFLSVCNKTIENNIPTCWLQGEISNLTRPASGHWYFSLKDNTVQVRCALFRFNQRYIKFSPKNGIEVLVRVVPTLYEARGNFQLVIQQIEQIGIGNLNLAFKQLKKDLDNEGLFDNIHKKPLPNTINTIGVISSSTGAVIQDIIKVLNNRYPFVKILLFDSIVQGQDSIKKLTNALNIADQSGKCDVIIIARGGGSLEDLWAFNEEILARAIFNAKTPIISAIGHETDTTIADLVSDIRAPTPSFAAMLVTSNRLELLSNTNKLYTQLHQSYRQTLHYYQSRLNQLKLKISNPNKQIDYLNQKLDYLSINLTTRKESIFTLNNAKLNSLFTTLKQHSPIKTIKHAKSLNQMSLNQLKYQIKQIINTNNNMLYLATERLQKIIMALTNKHKARLSIQANSLHYLSPLNILARGFSITSDTKNQVLSSVTNIKINQTIITQLDNGALYSNIEKIEKN</sequence>
<organism>
    <name type="scientific">Vesicomyosocius okutanii subsp. Calyptogena okutanii (strain HA)</name>
    <dbReference type="NCBI Taxonomy" id="412965"/>
    <lineage>
        <taxon>Bacteria</taxon>
        <taxon>Pseudomonadati</taxon>
        <taxon>Pseudomonadota</taxon>
        <taxon>Gammaproteobacteria</taxon>
        <taxon>Candidatus Pseudothioglobaceae</taxon>
        <taxon>Candidatus Vesicomyosocius</taxon>
    </lineage>
</organism>
<gene>
    <name evidence="1" type="primary">xseA</name>
    <name type="ordered locus">COSY_0695</name>
</gene>
<feature type="chain" id="PRO_1000048790" description="Exodeoxyribonuclease 7 large subunit">
    <location>
        <begin position="1"/>
        <end position="466"/>
    </location>
</feature>
<dbReference type="EC" id="3.1.11.6" evidence="1"/>
<dbReference type="EMBL" id="AP009247">
    <property type="protein sequence ID" value="BAF61807.1"/>
    <property type="molecule type" value="Genomic_DNA"/>
</dbReference>
<dbReference type="RefSeq" id="WP_011930077.1">
    <property type="nucleotide sequence ID" value="NC_009465.1"/>
</dbReference>
<dbReference type="SMR" id="A5CW49"/>
<dbReference type="STRING" id="412965.COSY_0695"/>
<dbReference type="KEGG" id="vok:COSY_0695"/>
<dbReference type="eggNOG" id="COG1570">
    <property type="taxonomic scope" value="Bacteria"/>
</dbReference>
<dbReference type="HOGENOM" id="CLU_023625_3_1_6"/>
<dbReference type="OrthoDB" id="9802795at2"/>
<dbReference type="Proteomes" id="UP000000247">
    <property type="component" value="Chromosome"/>
</dbReference>
<dbReference type="GO" id="GO:0005737">
    <property type="term" value="C:cytoplasm"/>
    <property type="evidence" value="ECO:0007669"/>
    <property type="project" value="UniProtKB-SubCell"/>
</dbReference>
<dbReference type="GO" id="GO:0009318">
    <property type="term" value="C:exodeoxyribonuclease VII complex"/>
    <property type="evidence" value="ECO:0007669"/>
    <property type="project" value="InterPro"/>
</dbReference>
<dbReference type="GO" id="GO:0008855">
    <property type="term" value="F:exodeoxyribonuclease VII activity"/>
    <property type="evidence" value="ECO:0007669"/>
    <property type="project" value="UniProtKB-UniRule"/>
</dbReference>
<dbReference type="GO" id="GO:0003676">
    <property type="term" value="F:nucleic acid binding"/>
    <property type="evidence" value="ECO:0007669"/>
    <property type="project" value="InterPro"/>
</dbReference>
<dbReference type="GO" id="GO:0006308">
    <property type="term" value="P:DNA catabolic process"/>
    <property type="evidence" value="ECO:0007669"/>
    <property type="project" value="UniProtKB-UniRule"/>
</dbReference>
<dbReference type="CDD" id="cd04489">
    <property type="entry name" value="ExoVII_LU_OBF"/>
    <property type="match status" value="1"/>
</dbReference>
<dbReference type="HAMAP" id="MF_00378">
    <property type="entry name" value="Exonuc_7_L"/>
    <property type="match status" value="1"/>
</dbReference>
<dbReference type="InterPro" id="IPR003753">
    <property type="entry name" value="Exonuc_VII_L"/>
</dbReference>
<dbReference type="InterPro" id="IPR020579">
    <property type="entry name" value="Exonuc_VII_lsu_C"/>
</dbReference>
<dbReference type="InterPro" id="IPR025824">
    <property type="entry name" value="OB-fold_nuc-bd_dom"/>
</dbReference>
<dbReference type="NCBIfam" id="TIGR00237">
    <property type="entry name" value="xseA"/>
    <property type="match status" value="1"/>
</dbReference>
<dbReference type="PANTHER" id="PTHR30008">
    <property type="entry name" value="EXODEOXYRIBONUCLEASE 7 LARGE SUBUNIT"/>
    <property type="match status" value="1"/>
</dbReference>
<dbReference type="PANTHER" id="PTHR30008:SF0">
    <property type="entry name" value="EXODEOXYRIBONUCLEASE 7 LARGE SUBUNIT"/>
    <property type="match status" value="1"/>
</dbReference>
<dbReference type="Pfam" id="PF02601">
    <property type="entry name" value="Exonuc_VII_L"/>
    <property type="match status" value="1"/>
</dbReference>
<dbReference type="Pfam" id="PF13742">
    <property type="entry name" value="tRNA_anti_2"/>
    <property type="match status" value="1"/>
</dbReference>